<protein>
    <recommendedName>
        <fullName>Heat shock protein beta-7</fullName>
        <shortName>HspB7</shortName>
    </recommendedName>
    <alternativeName>
        <fullName>Cardiovascular heat shock protein</fullName>
        <shortName>cvHsp</shortName>
    </alternativeName>
    <alternativeName>
        <fullName>Heat shock protein 25 kDa 2</fullName>
    </alternativeName>
    <alternativeName>
        <fullName>Protein p19/6.8</fullName>
    </alternativeName>
</protein>
<dbReference type="EMBL" id="AJ243192">
    <property type="protein sequence ID" value="CAB63266.1"/>
    <property type="molecule type" value="mRNA"/>
</dbReference>
<dbReference type="EMBL" id="AF155909">
    <property type="protein sequence ID" value="AAF20023.1"/>
    <property type="molecule type" value="mRNA"/>
</dbReference>
<dbReference type="EMBL" id="AK030025">
    <property type="protein sequence ID" value="BAC26743.1"/>
    <property type="molecule type" value="mRNA"/>
</dbReference>
<dbReference type="EMBL" id="AL670285">
    <property type="status" value="NOT_ANNOTATED_CDS"/>
    <property type="molecule type" value="Genomic_DNA"/>
</dbReference>
<dbReference type="EMBL" id="CH466615">
    <property type="protein sequence ID" value="EDL13373.1"/>
    <property type="molecule type" value="Genomic_DNA"/>
</dbReference>
<dbReference type="EMBL" id="BC089584">
    <property type="protein sequence ID" value="AAH89584.1"/>
    <property type="molecule type" value="mRNA"/>
</dbReference>
<dbReference type="CCDS" id="CCDS18873.1"/>
<dbReference type="RefSeq" id="NP_038896.2">
    <property type="nucleotide sequence ID" value="NM_013868.4"/>
</dbReference>
<dbReference type="SMR" id="P35385"/>
<dbReference type="FunCoup" id="P35385">
    <property type="interactions" value="1000"/>
</dbReference>
<dbReference type="STRING" id="10090.ENSMUSP00000099544"/>
<dbReference type="GlyGen" id="P35385">
    <property type="glycosylation" value="1 site, 1 O-linked glycan (1 site)"/>
</dbReference>
<dbReference type="iPTMnet" id="P35385"/>
<dbReference type="PhosphoSitePlus" id="P35385"/>
<dbReference type="jPOST" id="P35385"/>
<dbReference type="PaxDb" id="10090-ENSMUSP00000099544"/>
<dbReference type="PeptideAtlas" id="P35385"/>
<dbReference type="ProteomicsDB" id="273391"/>
<dbReference type="Antibodypedia" id="29049">
    <property type="antibodies" value="264 antibodies from 30 providers"/>
</dbReference>
<dbReference type="DNASU" id="29818"/>
<dbReference type="Ensembl" id="ENSMUST00000102486.5">
    <property type="protein sequence ID" value="ENSMUSP00000099544.5"/>
    <property type="gene ID" value="ENSMUSG00000006221.8"/>
</dbReference>
<dbReference type="GeneID" id="29818"/>
<dbReference type="KEGG" id="mmu:29818"/>
<dbReference type="UCSC" id="uc008voj.1">
    <property type="organism name" value="mouse"/>
</dbReference>
<dbReference type="AGR" id="MGI:1352494"/>
<dbReference type="CTD" id="27129"/>
<dbReference type="MGI" id="MGI:1352494">
    <property type="gene designation" value="Hspb7"/>
</dbReference>
<dbReference type="VEuPathDB" id="HostDB:ENSMUSG00000006221"/>
<dbReference type="eggNOG" id="KOG3591">
    <property type="taxonomic scope" value="Eukaryota"/>
</dbReference>
<dbReference type="GeneTree" id="ENSGT00390000010674"/>
<dbReference type="HOGENOM" id="CLU_124226_0_0_1"/>
<dbReference type="InParanoid" id="P35385"/>
<dbReference type="OMA" id="CNPYMEK"/>
<dbReference type="OrthoDB" id="9925191at2759"/>
<dbReference type="PhylomeDB" id="P35385"/>
<dbReference type="TreeFam" id="TF350564"/>
<dbReference type="BioGRID-ORCS" id="29818">
    <property type="hits" value="5 hits in 78 CRISPR screens"/>
</dbReference>
<dbReference type="PRO" id="PR:P35385"/>
<dbReference type="Proteomes" id="UP000000589">
    <property type="component" value="Chromosome 4"/>
</dbReference>
<dbReference type="RNAct" id="P35385">
    <property type="molecule type" value="protein"/>
</dbReference>
<dbReference type="Bgee" id="ENSMUSG00000006221">
    <property type="expression patterns" value="Expressed in interventricular septum and 118 other cell types or tissues"/>
</dbReference>
<dbReference type="GO" id="GO:0015629">
    <property type="term" value="C:actin cytoskeleton"/>
    <property type="evidence" value="ECO:0000353"/>
    <property type="project" value="MGI"/>
</dbReference>
<dbReference type="GO" id="GO:0016235">
    <property type="term" value="C:aggresome"/>
    <property type="evidence" value="ECO:0007669"/>
    <property type="project" value="Ensembl"/>
</dbReference>
<dbReference type="GO" id="GO:0015030">
    <property type="term" value="C:Cajal body"/>
    <property type="evidence" value="ECO:0007669"/>
    <property type="project" value="UniProtKB-SubCell"/>
</dbReference>
<dbReference type="GO" id="GO:0005739">
    <property type="term" value="C:mitochondrion"/>
    <property type="evidence" value="ECO:0007005"/>
    <property type="project" value="MGI"/>
</dbReference>
<dbReference type="GO" id="GO:0005634">
    <property type="term" value="C:nucleus"/>
    <property type="evidence" value="ECO:0000250"/>
    <property type="project" value="UniProtKB"/>
</dbReference>
<dbReference type="GO" id="GO:0031005">
    <property type="term" value="F:filamin binding"/>
    <property type="evidence" value="ECO:0000314"/>
    <property type="project" value="MGI"/>
</dbReference>
<dbReference type="GO" id="GO:0007507">
    <property type="term" value="P:heart development"/>
    <property type="evidence" value="ECO:0007669"/>
    <property type="project" value="InterPro"/>
</dbReference>
<dbReference type="CDD" id="cd06479">
    <property type="entry name" value="ACD_HspB7_like"/>
    <property type="match status" value="1"/>
</dbReference>
<dbReference type="FunFam" id="2.60.40.790:FF:000020">
    <property type="entry name" value="heat shock protein beta-7 isoform X1"/>
    <property type="match status" value="1"/>
</dbReference>
<dbReference type="Gene3D" id="2.60.40.790">
    <property type="match status" value="1"/>
</dbReference>
<dbReference type="InterPro" id="IPR002068">
    <property type="entry name" value="A-crystallin/Hsp20_dom"/>
</dbReference>
<dbReference type="InterPro" id="IPR037885">
    <property type="entry name" value="ACD_HspB7"/>
</dbReference>
<dbReference type="InterPro" id="IPR001436">
    <property type="entry name" value="Alpha-crystallin/sHSP_animal"/>
</dbReference>
<dbReference type="InterPro" id="IPR008978">
    <property type="entry name" value="HSP20-like_chaperone"/>
</dbReference>
<dbReference type="PANTHER" id="PTHR46907:SF2">
    <property type="entry name" value="HEAT SHOCK PROTEIN BETA-7"/>
    <property type="match status" value="1"/>
</dbReference>
<dbReference type="PANTHER" id="PTHR46907">
    <property type="entry name" value="HEAT SHOCK PROTEIN BETA-7-RELATED"/>
    <property type="match status" value="1"/>
</dbReference>
<dbReference type="Pfam" id="PF00011">
    <property type="entry name" value="HSP20"/>
    <property type="match status" value="1"/>
</dbReference>
<dbReference type="PRINTS" id="PR00299">
    <property type="entry name" value="ACRYSTALLIN"/>
</dbReference>
<dbReference type="SUPFAM" id="SSF49764">
    <property type="entry name" value="HSP20-like chaperones"/>
    <property type="match status" value="1"/>
</dbReference>
<dbReference type="PROSITE" id="PS01031">
    <property type="entry name" value="SHSP"/>
    <property type="match status" value="1"/>
</dbReference>
<accession>P35385</accession>
<accession>Q5FW72</accession>
<accession>Q8CDI0</accession>
<accession>Q9QUS2</accession>
<proteinExistence type="evidence at protein level"/>
<keyword id="KW-0143">Chaperone</keyword>
<keyword id="KW-0963">Cytoplasm</keyword>
<keyword id="KW-0903">Direct protein sequencing</keyword>
<keyword id="KW-0539">Nucleus</keyword>
<keyword id="KW-1185">Reference proteome</keyword>
<keyword id="KW-0346">Stress response</keyword>
<feature type="chain" id="PRO_0000125942" description="Heat shock protein beta-7">
    <location>
        <begin position="1"/>
        <end position="169"/>
    </location>
</feature>
<feature type="domain" description="sHSP" evidence="2">
    <location>
        <begin position="61"/>
        <end position="169"/>
    </location>
</feature>
<feature type="region of interest" description="Required for localization to SC35 splicing speckles" evidence="1">
    <location>
        <begin position="1"/>
        <end position="70"/>
    </location>
</feature>
<feature type="region of interest" description="Disordered" evidence="3">
    <location>
        <begin position="1"/>
        <end position="37"/>
    </location>
</feature>
<feature type="compositionally biased region" description="Low complexity" evidence="3">
    <location>
        <begin position="16"/>
        <end position="32"/>
    </location>
</feature>
<feature type="sequence conflict" description="In Ref. 1; CAB63266/AAF20023." evidence="4" ref="1">
    <original>S</original>
    <variation>P</variation>
    <location>
        <position position="23"/>
    </location>
</feature>
<feature type="sequence conflict" description="In Ref. 6; AA sequence." evidence="4" ref="6">
    <original>EP</original>
    <variation>GD</variation>
    <location>
        <begin position="60"/>
        <end position="61"/>
    </location>
</feature>
<feature type="sequence conflict" description="In Ref. 1; CAB63266/AAF20023." evidence="4" ref="1">
    <original>H</original>
    <variation>N</variation>
    <location>
        <position position="153"/>
    </location>
</feature>
<comment type="subunit">
    <text>Interacts with C-terminal domain of actin-binding protein 280.</text>
</comment>
<comment type="subcellular location">
    <subcellularLocation>
        <location evidence="1">Cytoplasm</location>
    </subcellularLocation>
    <subcellularLocation>
        <location evidence="1">Nucleus</location>
    </subcellularLocation>
    <subcellularLocation>
        <location evidence="1">Nucleus</location>
        <location evidence="1">Cajal body</location>
    </subcellularLocation>
    <text evidence="1">Resides in sub-nuclear structures known as SC35 speckles or nuclear splicing speckles.</text>
</comment>
<comment type="tissue specificity">
    <text>Found in both cardiac and slow skeletal (soleus) muscle.</text>
</comment>
<comment type="similarity">
    <text evidence="2">Belongs to the small heat shock protein (HSP20) family.</text>
</comment>
<sequence length="169" mass="18635">MSHRTSSAFRAERSFRSSSSSSSSSSSSASRALPAQDPPMEKALSMFSDDFGSFMLPHSEPLAFPARPGGQGNIKTLGDAYEFTVDMRDFSPEDIIVTTFNNHIEVRAEKLAADGTVMNTFAHKCQLPEDVDPTSVTSALREDGSLTIRARRHPHTEHVQQTFRTEIKI</sequence>
<reference key="1">
    <citation type="journal article" date="1999" name="J. Biol. Chem.">
        <title>Identification and characterization of cvHsp. A novel human small stress protein selectively expressed in cardiovascular and insulin-sensitive tissues.</title>
        <authorList>
            <person name="Krief S."/>
            <person name="Faivre J.-F."/>
            <person name="Robert P."/>
            <person name="Le Douarin B."/>
            <person name="Brument-Larignon N."/>
            <person name="Lefrere I."/>
            <person name="Bouzyk M.M."/>
            <person name="Anderson K.M."/>
            <person name="Greller L.D."/>
            <person name="Tobin F.L."/>
            <person name="Souchet M."/>
            <person name="Bril A."/>
        </authorList>
    </citation>
    <scope>NUCLEOTIDE SEQUENCE [MRNA]</scope>
    <source>
        <tissue>Heart</tissue>
    </source>
</reference>
<reference key="2">
    <citation type="journal article" date="2005" name="Science">
        <title>The transcriptional landscape of the mammalian genome.</title>
        <authorList>
            <person name="Carninci P."/>
            <person name="Kasukawa T."/>
            <person name="Katayama S."/>
            <person name="Gough J."/>
            <person name="Frith M.C."/>
            <person name="Maeda N."/>
            <person name="Oyama R."/>
            <person name="Ravasi T."/>
            <person name="Lenhard B."/>
            <person name="Wells C."/>
            <person name="Kodzius R."/>
            <person name="Shimokawa K."/>
            <person name="Bajic V.B."/>
            <person name="Brenner S.E."/>
            <person name="Batalov S."/>
            <person name="Forrest A.R."/>
            <person name="Zavolan M."/>
            <person name="Davis M.J."/>
            <person name="Wilming L.G."/>
            <person name="Aidinis V."/>
            <person name="Allen J.E."/>
            <person name="Ambesi-Impiombato A."/>
            <person name="Apweiler R."/>
            <person name="Aturaliya R.N."/>
            <person name="Bailey T.L."/>
            <person name="Bansal M."/>
            <person name="Baxter L."/>
            <person name="Beisel K.W."/>
            <person name="Bersano T."/>
            <person name="Bono H."/>
            <person name="Chalk A.M."/>
            <person name="Chiu K.P."/>
            <person name="Choudhary V."/>
            <person name="Christoffels A."/>
            <person name="Clutterbuck D.R."/>
            <person name="Crowe M.L."/>
            <person name="Dalla E."/>
            <person name="Dalrymple B.P."/>
            <person name="de Bono B."/>
            <person name="Della Gatta G."/>
            <person name="di Bernardo D."/>
            <person name="Down T."/>
            <person name="Engstrom P."/>
            <person name="Fagiolini M."/>
            <person name="Faulkner G."/>
            <person name="Fletcher C.F."/>
            <person name="Fukushima T."/>
            <person name="Furuno M."/>
            <person name="Futaki S."/>
            <person name="Gariboldi M."/>
            <person name="Georgii-Hemming P."/>
            <person name="Gingeras T.R."/>
            <person name="Gojobori T."/>
            <person name="Green R.E."/>
            <person name="Gustincich S."/>
            <person name="Harbers M."/>
            <person name="Hayashi Y."/>
            <person name="Hensch T.K."/>
            <person name="Hirokawa N."/>
            <person name="Hill D."/>
            <person name="Huminiecki L."/>
            <person name="Iacono M."/>
            <person name="Ikeo K."/>
            <person name="Iwama A."/>
            <person name="Ishikawa T."/>
            <person name="Jakt M."/>
            <person name="Kanapin A."/>
            <person name="Katoh M."/>
            <person name="Kawasawa Y."/>
            <person name="Kelso J."/>
            <person name="Kitamura H."/>
            <person name="Kitano H."/>
            <person name="Kollias G."/>
            <person name="Krishnan S.P."/>
            <person name="Kruger A."/>
            <person name="Kummerfeld S.K."/>
            <person name="Kurochkin I.V."/>
            <person name="Lareau L.F."/>
            <person name="Lazarevic D."/>
            <person name="Lipovich L."/>
            <person name="Liu J."/>
            <person name="Liuni S."/>
            <person name="McWilliam S."/>
            <person name="Madan Babu M."/>
            <person name="Madera M."/>
            <person name="Marchionni L."/>
            <person name="Matsuda H."/>
            <person name="Matsuzawa S."/>
            <person name="Miki H."/>
            <person name="Mignone F."/>
            <person name="Miyake S."/>
            <person name="Morris K."/>
            <person name="Mottagui-Tabar S."/>
            <person name="Mulder N."/>
            <person name="Nakano N."/>
            <person name="Nakauchi H."/>
            <person name="Ng P."/>
            <person name="Nilsson R."/>
            <person name="Nishiguchi S."/>
            <person name="Nishikawa S."/>
            <person name="Nori F."/>
            <person name="Ohara O."/>
            <person name="Okazaki Y."/>
            <person name="Orlando V."/>
            <person name="Pang K.C."/>
            <person name="Pavan W.J."/>
            <person name="Pavesi G."/>
            <person name="Pesole G."/>
            <person name="Petrovsky N."/>
            <person name="Piazza S."/>
            <person name="Reed J."/>
            <person name="Reid J.F."/>
            <person name="Ring B.Z."/>
            <person name="Ringwald M."/>
            <person name="Rost B."/>
            <person name="Ruan Y."/>
            <person name="Salzberg S.L."/>
            <person name="Sandelin A."/>
            <person name="Schneider C."/>
            <person name="Schoenbach C."/>
            <person name="Sekiguchi K."/>
            <person name="Semple C.A."/>
            <person name="Seno S."/>
            <person name="Sessa L."/>
            <person name="Sheng Y."/>
            <person name="Shibata Y."/>
            <person name="Shimada H."/>
            <person name="Shimada K."/>
            <person name="Silva D."/>
            <person name="Sinclair B."/>
            <person name="Sperling S."/>
            <person name="Stupka E."/>
            <person name="Sugiura K."/>
            <person name="Sultana R."/>
            <person name="Takenaka Y."/>
            <person name="Taki K."/>
            <person name="Tammoja K."/>
            <person name="Tan S.L."/>
            <person name="Tang S."/>
            <person name="Taylor M.S."/>
            <person name="Tegner J."/>
            <person name="Teichmann S.A."/>
            <person name="Ueda H.R."/>
            <person name="van Nimwegen E."/>
            <person name="Verardo R."/>
            <person name="Wei C.L."/>
            <person name="Yagi K."/>
            <person name="Yamanishi H."/>
            <person name="Zabarovsky E."/>
            <person name="Zhu S."/>
            <person name="Zimmer A."/>
            <person name="Hide W."/>
            <person name="Bult C."/>
            <person name="Grimmond S.M."/>
            <person name="Teasdale R.D."/>
            <person name="Liu E.T."/>
            <person name="Brusic V."/>
            <person name="Quackenbush J."/>
            <person name="Wahlestedt C."/>
            <person name="Mattick J.S."/>
            <person name="Hume D.A."/>
            <person name="Kai C."/>
            <person name="Sasaki D."/>
            <person name="Tomaru Y."/>
            <person name="Fukuda S."/>
            <person name="Kanamori-Katayama M."/>
            <person name="Suzuki M."/>
            <person name="Aoki J."/>
            <person name="Arakawa T."/>
            <person name="Iida J."/>
            <person name="Imamura K."/>
            <person name="Itoh M."/>
            <person name="Kato T."/>
            <person name="Kawaji H."/>
            <person name="Kawagashira N."/>
            <person name="Kawashima T."/>
            <person name="Kojima M."/>
            <person name="Kondo S."/>
            <person name="Konno H."/>
            <person name="Nakano K."/>
            <person name="Ninomiya N."/>
            <person name="Nishio T."/>
            <person name="Okada M."/>
            <person name="Plessy C."/>
            <person name="Shibata K."/>
            <person name="Shiraki T."/>
            <person name="Suzuki S."/>
            <person name="Tagami M."/>
            <person name="Waki K."/>
            <person name="Watahiki A."/>
            <person name="Okamura-Oho Y."/>
            <person name="Suzuki H."/>
            <person name="Kawai J."/>
            <person name="Hayashizaki Y."/>
        </authorList>
    </citation>
    <scope>NUCLEOTIDE SEQUENCE [LARGE SCALE MRNA]</scope>
    <source>
        <strain>C57BL/6J</strain>
        <tissue>Testis</tissue>
    </source>
</reference>
<reference key="3">
    <citation type="journal article" date="2009" name="PLoS Biol.">
        <title>Lineage-specific biology revealed by a finished genome assembly of the mouse.</title>
        <authorList>
            <person name="Church D.M."/>
            <person name="Goodstadt L."/>
            <person name="Hillier L.W."/>
            <person name="Zody M.C."/>
            <person name="Goldstein S."/>
            <person name="She X."/>
            <person name="Bult C.J."/>
            <person name="Agarwala R."/>
            <person name="Cherry J.L."/>
            <person name="DiCuccio M."/>
            <person name="Hlavina W."/>
            <person name="Kapustin Y."/>
            <person name="Meric P."/>
            <person name="Maglott D."/>
            <person name="Birtle Z."/>
            <person name="Marques A.C."/>
            <person name="Graves T."/>
            <person name="Zhou S."/>
            <person name="Teague B."/>
            <person name="Potamousis K."/>
            <person name="Churas C."/>
            <person name="Place M."/>
            <person name="Herschleb J."/>
            <person name="Runnheim R."/>
            <person name="Forrest D."/>
            <person name="Amos-Landgraf J."/>
            <person name="Schwartz D.C."/>
            <person name="Cheng Z."/>
            <person name="Lindblad-Toh K."/>
            <person name="Eichler E.E."/>
            <person name="Ponting C.P."/>
        </authorList>
    </citation>
    <scope>NUCLEOTIDE SEQUENCE [LARGE SCALE GENOMIC DNA]</scope>
    <source>
        <strain>C57BL/6J</strain>
    </source>
</reference>
<reference key="4">
    <citation type="submission" date="2005-07" db="EMBL/GenBank/DDBJ databases">
        <authorList>
            <person name="Mural R.J."/>
            <person name="Adams M.D."/>
            <person name="Myers E.W."/>
            <person name="Smith H.O."/>
            <person name="Venter J.C."/>
        </authorList>
    </citation>
    <scope>NUCLEOTIDE SEQUENCE [LARGE SCALE GENOMIC DNA]</scope>
</reference>
<reference key="5">
    <citation type="journal article" date="2004" name="Genome Res.">
        <title>The status, quality, and expansion of the NIH full-length cDNA project: the Mammalian Gene Collection (MGC).</title>
        <authorList>
            <consortium name="The MGC Project Team"/>
        </authorList>
    </citation>
    <scope>NUCLEOTIDE SEQUENCE [LARGE SCALE MRNA]</scope>
    <source>
        <tissue>Heart</tissue>
    </source>
</reference>
<reference key="6">
    <citation type="journal article" date="1989" name="Mouse News Lett.">
        <authorList>
            <person name="Kluxen F.-W."/>
            <person name="Vandekerckhove J."/>
            <person name="Schoeffl F."/>
            <person name="Jockusch H."/>
        </authorList>
    </citation>
    <scope>PROTEIN SEQUENCE OF 43-61 AND 76-87</scope>
    <source>
        <tissue>Muscle</tissue>
    </source>
</reference>
<reference key="7">
    <citation type="journal article" date="2010" name="Cell">
        <title>A tissue-specific atlas of mouse protein phosphorylation and expression.</title>
        <authorList>
            <person name="Huttlin E.L."/>
            <person name="Jedrychowski M.P."/>
            <person name="Elias J.E."/>
            <person name="Goswami T."/>
            <person name="Rad R."/>
            <person name="Beausoleil S.A."/>
            <person name="Villen J."/>
            <person name="Haas W."/>
            <person name="Sowa M.E."/>
            <person name="Gygi S.P."/>
        </authorList>
    </citation>
    <scope>IDENTIFICATION BY MASS SPECTROMETRY [LARGE SCALE ANALYSIS]</scope>
    <source>
        <tissue>Heart</tissue>
    </source>
</reference>
<evidence type="ECO:0000250" key="1"/>
<evidence type="ECO:0000255" key="2">
    <source>
        <dbReference type="PROSITE-ProRule" id="PRU00285"/>
    </source>
</evidence>
<evidence type="ECO:0000256" key="3">
    <source>
        <dbReference type="SAM" id="MobiDB-lite"/>
    </source>
</evidence>
<evidence type="ECO:0000305" key="4"/>
<name>HSPB7_MOUSE</name>
<organism>
    <name type="scientific">Mus musculus</name>
    <name type="common">Mouse</name>
    <dbReference type="NCBI Taxonomy" id="10090"/>
    <lineage>
        <taxon>Eukaryota</taxon>
        <taxon>Metazoa</taxon>
        <taxon>Chordata</taxon>
        <taxon>Craniata</taxon>
        <taxon>Vertebrata</taxon>
        <taxon>Euteleostomi</taxon>
        <taxon>Mammalia</taxon>
        <taxon>Eutheria</taxon>
        <taxon>Euarchontoglires</taxon>
        <taxon>Glires</taxon>
        <taxon>Rodentia</taxon>
        <taxon>Myomorpha</taxon>
        <taxon>Muroidea</taxon>
        <taxon>Muridae</taxon>
        <taxon>Murinae</taxon>
        <taxon>Mus</taxon>
        <taxon>Mus</taxon>
    </lineage>
</organism>
<gene>
    <name type="primary">Hspb7</name>
    <name type="synonym">Cvhsp</name>
    <name type="synonym">Hsp25-2</name>
</gene>